<gene>
    <name evidence="9" type="primary">aglB</name>
    <name type="ORF">MVO1749</name>
</gene>
<protein>
    <recommendedName>
        <fullName evidence="10">Dolichyl-phosphooligosaccharide-protein glycotransferase</fullName>
        <ecNumber evidence="7">2.4.99.21</ecNumber>
    </recommendedName>
    <alternativeName>
        <fullName evidence="10">Oligosaccharyl transferase</fullName>
        <shortName evidence="11">OST</shortName>
        <shortName evidence="10">OTase</shortName>
    </alternativeName>
</protein>
<comment type="function">
    <text evidence="6 7 8 15">Oligosaccharyl transferase (OST) that catalyzes the initial transfer of a defined glycan (ManNAcGlc-2,3-diNAcAGlcNAc in M.voltae) from the lipid carrier dolichol-monophosphate to an asparagine residue within an Asn-X-Ser/Thr consensus motif in nascent polypeptide chains, the first step in protein N-glycosylation (Probable) (PubMed:24212570). Involved in the assembly of an N-linked disaccharide that decorates the S-layer glycoprotein and flagellins (PubMed:16824110, PubMed:23624439).</text>
</comment>
<comment type="catalytic activity">
    <reaction evidence="7">
        <text>an archaeal dolichyl phosphooligosaccharide + [protein]-L-asparagine = an archaeal dolichyl phosphate + a glycoprotein with the oligosaccharide chain attached by N-beta-D-glycosyl linkage to a protein L-asparagine.</text>
        <dbReference type="EC" id="2.4.99.21"/>
    </reaction>
</comment>
<comment type="cofactor">
    <cofactor evidence="7">
        <name>Mn(2+)</name>
        <dbReference type="ChEBI" id="CHEBI:29035"/>
    </cofactor>
    <cofactor evidence="2">
        <name>Mg(2+)</name>
        <dbReference type="ChEBI" id="CHEBI:18420"/>
    </cofactor>
</comment>
<comment type="pathway">
    <text evidence="13">Cell surface structure biogenesis; S-layer biogenesis.</text>
</comment>
<comment type="pathway">
    <text evidence="13">Protein modification; protein glycosylation.</text>
</comment>
<comment type="subcellular location">
    <subcellularLocation>
        <location evidence="14">Cell membrane</location>
        <topology evidence="14">Multi-pass membrane protein</topology>
    </subcellularLocation>
</comment>
<comment type="domain">
    <text evidence="2">Despite low primary sequence conservation between eukaryotic catalytic subunits and bacterial and archaeal single subunit OSTs (ssOST), structural comparison revealed several common motifs at spatially equivalent positions, like the DXD motif 1 on the external loop 1 and the DXD motif 2 on the external loop 2 involved in binding of the metal ion cofactor and the carboxamide group of the acceptor asparagine, the conserved Glu residue of the TIXE/SVSE motif on the external loop 5 involved in catalysis, as well as the WWDYG and the DK/MI motifs in the globular domain that define the binding pocket for the +2 Ser/Thr of the acceptor sequon. In bacterial ssOSTs, an Arg residue was found to interact with a negatively charged side chain at the -2 position of the sequon. This Arg is conserved in bacterial enzymes and correlates with an extended sequon requirement (Asp-X-Asn-X-Ser/Thr) for bacterial N-glycosylation.</text>
</comment>
<comment type="disruption phenotype">
    <text evidence="6">Cells lacking this gene result in flagellins and S-layer proteins with significantly reduced apparent molecular masses, loss of flagellar assembly and absence of glycan attachment.</text>
</comment>
<comment type="similarity">
    <text evidence="12">Belongs to the STT3 family.</text>
</comment>
<evidence type="ECO:0000250" key="1">
    <source>
        <dbReference type="UniProtKB" id="B9KDD4"/>
    </source>
</evidence>
<evidence type="ECO:0000250" key="2">
    <source>
        <dbReference type="UniProtKB" id="O29867"/>
    </source>
</evidence>
<evidence type="ECO:0000250" key="3">
    <source>
        <dbReference type="UniProtKB" id="O29918"/>
    </source>
</evidence>
<evidence type="ECO:0000255" key="4"/>
<evidence type="ECO:0000256" key="5">
    <source>
        <dbReference type="SAM" id="MobiDB-lite"/>
    </source>
</evidence>
<evidence type="ECO:0000269" key="6">
    <source>
    </source>
</evidence>
<evidence type="ECO:0000269" key="7">
    <source>
    </source>
</evidence>
<evidence type="ECO:0000269" key="8">
    <source>
    </source>
</evidence>
<evidence type="ECO:0000303" key="9">
    <source>
    </source>
</evidence>
<evidence type="ECO:0000303" key="10">
    <source>
    </source>
</evidence>
<evidence type="ECO:0000303" key="11">
    <source>
    </source>
</evidence>
<evidence type="ECO:0000305" key="12"/>
<evidence type="ECO:0000305" key="13">
    <source>
    </source>
</evidence>
<evidence type="ECO:0000305" key="14">
    <source>
    </source>
</evidence>
<evidence type="ECO:0000305" key="15">
    <source>
    </source>
</evidence>
<feature type="chain" id="PRO_0000435653" description="Dolichyl-phosphooligosaccharide-protein glycotransferase">
    <location>
        <begin position="1"/>
        <end position="917"/>
    </location>
</feature>
<feature type="topological domain" description="Cytoplasmic" evidence="12">
    <location>
        <begin position="1"/>
        <end position="38"/>
    </location>
</feature>
<feature type="transmembrane region" description="Helical" evidence="4">
    <location>
        <begin position="39"/>
        <end position="59"/>
    </location>
</feature>
<feature type="topological domain" description="Extracellular" evidence="12">
    <location>
        <begin position="60"/>
        <end position="154"/>
    </location>
</feature>
<feature type="transmembrane region" description="Helical" evidence="4">
    <location>
        <begin position="155"/>
        <end position="175"/>
    </location>
</feature>
<feature type="topological domain" description="Cytoplasmic" evidence="12">
    <location>
        <begin position="176"/>
        <end position="182"/>
    </location>
</feature>
<feature type="transmembrane region" description="Helical" evidence="4">
    <location>
        <begin position="183"/>
        <end position="203"/>
    </location>
</feature>
<feature type="topological domain" description="Extracellular" evidence="12">
    <location>
        <begin position="204"/>
        <end position="209"/>
    </location>
</feature>
<feature type="transmembrane region" description="Helical" evidence="4">
    <location>
        <begin position="210"/>
        <end position="230"/>
    </location>
</feature>
<feature type="topological domain" description="Cytoplasmic" evidence="12">
    <location>
        <begin position="231"/>
        <end position="237"/>
    </location>
</feature>
<feature type="transmembrane region" description="Helical" evidence="4">
    <location>
        <begin position="238"/>
        <end position="260"/>
    </location>
</feature>
<feature type="topological domain" description="Extracellular" evidence="12">
    <location>
        <begin position="261"/>
        <end position="263"/>
    </location>
</feature>
<feature type="transmembrane region" description="Helical" evidence="4">
    <location>
        <begin position="264"/>
        <end position="286"/>
    </location>
</feature>
<feature type="topological domain" description="Cytoplasmic" evidence="12">
    <location>
        <begin position="287"/>
        <end position="308"/>
    </location>
</feature>
<feature type="transmembrane region" description="Helical" evidence="4">
    <location>
        <begin position="309"/>
        <end position="329"/>
    </location>
</feature>
<feature type="topological domain" description="Extracellular" evidence="12">
    <location>
        <begin position="330"/>
        <end position="372"/>
    </location>
</feature>
<feature type="transmembrane region" description="Helical" evidence="4">
    <location>
        <begin position="373"/>
        <end position="393"/>
    </location>
</feature>
<feature type="topological domain" description="Cytoplasmic" evidence="12">
    <location>
        <begin position="394"/>
        <end position="413"/>
    </location>
</feature>
<feature type="transmembrane region" description="Helical" evidence="4">
    <location>
        <begin position="414"/>
        <end position="434"/>
    </location>
</feature>
<feature type="topological domain" description="Extracellular" evidence="12">
    <location>
        <begin position="435"/>
        <end position="438"/>
    </location>
</feature>
<feature type="transmembrane region" description="Helical" evidence="4">
    <location>
        <begin position="439"/>
        <end position="459"/>
    </location>
</feature>
<feature type="topological domain" description="Cytoplasmic" evidence="12">
    <location>
        <begin position="460"/>
        <end position="469"/>
    </location>
</feature>
<feature type="transmembrane region" description="Helical" evidence="4">
    <location>
        <begin position="470"/>
        <end position="490"/>
    </location>
</feature>
<feature type="topological domain" description="Extracellular" evidence="12">
    <location>
        <begin position="491"/>
        <end position="506"/>
    </location>
</feature>
<feature type="transmembrane region" description="Helical" evidence="4">
    <location>
        <begin position="507"/>
        <end position="527"/>
    </location>
</feature>
<feature type="topological domain" description="Cytoplasmic" evidence="12">
    <location>
        <begin position="528"/>
        <end position="541"/>
    </location>
</feature>
<feature type="transmembrane region" description="Helical" evidence="4">
    <location>
        <begin position="542"/>
        <end position="562"/>
    </location>
</feature>
<feature type="topological domain" description="Extracellular" evidence="12">
    <location>
        <begin position="563"/>
        <end position="917"/>
    </location>
</feature>
<feature type="region of interest" description="Disordered" evidence="5">
    <location>
        <begin position="1"/>
        <end position="20"/>
    </location>
</feature>
<feature type="region of interest" description="Interacts with target acceptor peptide in protein substrate" evidence="1">
    <location>
        <begin position="592"/>
        <end position="594"/>
    </location>
</feature>
<feature type="short sequence motif" description="DXD motif 1" evidence="1">
    <location>
        <begin position="82"/>
        <end position="84"/>
    </location>
</feature>
<feature type="short sequence motif" description="DXD motif 2" evidence="1">
    <location>
        <begin position="208"/>
        <end position="210"/>
    </location>
</feature>
<feature type="short sequence motif" description="TIXE motif" evidence="2">
    <location>
        <begin position="361"/>
        <end position="364"/>
    </location>
</feature>
<feature type="short sequence motif" description="WWDYG motif" evidence="3">
    <location>
        <begin position="592"/>
        <end position="596"/>
    </location>
</feature>
<feature type="short sequence motif" description="MI motif" evidence="3">
    <location>
        <begin position="719"/>
        <end position="726"/>
    </location>
</feature>
<feature type="compositionally biased region" description="Basic and acidic residues" evidence="5">
    <location>
        <begin position="1"/>
        <end position="10"/>
    </location>
</feature>
<feature type="compositionally biased region" description="Low complexity" evidence="5">
    <location>
        <begin position="11"/>
        <end position="20"/>
    </location>
</feature>
<feature type="binding site" evidence="1">
    <location>
        <position position="84"/>
    </location>
    <ligand>
        <name>Mn(2+)</name>
        <dbReference type="ChEBI" id="CHEBI:29035"/>
    </ligand>
</feature>
<feature type="binding site" evidence="1">
    <location>
        <position position="208"/>
    </location>
    <ligand>
        <name>Mn(2+)</name>
        <dbReference type="ChEBI" id="CHEBI:29035"/>
    </ligand>
</feature>
<feature type="binding site" evidence="1">
    <location>
        <position position="364"/>
    </location>
    <ligand>
        <name>Mn(2+)</name>
        <dbReference type="ChEBI" id="CHEBI:29035"/>
    </ligand>
</feature>
<feature type="binding site" evidence="1">
    <location>
        <position position="438"/>
    </location>
    <ligand>
        <name>a glycophospholipid</name>
        <dbReference type="ChEBI" id="CHEBI:24397"/>
        <note>archaeal dolichyl phosphooligosaccharide</note>
    </ligand>
</feature>
<feature type="site" description="Interacts with target acceptor peptide in protein substrate" evidence="1">
    <location>
        <position position="84"/>
    </location>
</feature>
<feature type="site" description="Important for catalytic activity" evidence="1">
    <location>
        <position position="201"/>
    </location>
</feature>
<feature type="site" description="Interacts with target acceptor peptide in protein substrate" evidence="1">
    <location>
        <position position="364"/>
    </location>
</feature>
<feature type="site" description="Interacts with target acceptor peptide in protein substrate" evidence="1">
    <location>
        <position position="722"/>
    </location>
</feature>
<keyword id="KW-1003">Cell membrane</keyword>
<keyword id="KW-0328">Glycosyltransferase</keyword>
<keyword id="KW-0460">Magnesium</keyword>
<keyword id="KW-0464">Manganese</keyword>
<keyword id="KW-0472">Membrane</keyword>
<keyword id="KW-0479">Metal-binding</keyword>
<keyword id="KW-0808">Transferase</keyword>
<keyword id="KW-0812">Transmembrane</keyword>
<keyword id="KW-1133">Transmembrane helix</keyword>
<proteinExistence type="evidence at protein level"/>
<accession>Q2EMT4</accession>
<name>AGLB_METVO</name>
<organism>
    <name type="scientific">Methanococcus voltae</name>
    <dbReference type="NCBI Taxonomy" id="2188"/>
    <lineage>
        <taxon>Archaea</taxon>
        <taxon>Methanobacteriati</taxon>
        <taxon>Methanobacteriota</taxon>
        <taxon>Methanomada group</taxon>
        <taxon>Methanococci</taxon>
        <taxon>Methanococcales</taxon>
        <taxon>Methanococcaceae</taxon>
        <taxon>Methanococcus</taxon>
    </lineage>
</organism>
<sequence length="917" mass="102424">MTENNEKVKNSDSANNQSSKNSKFNFNFEDKKVKCAKTILIIIFLAFLSFQMRAQTADMGFTTNEQYLDVFSDDNGRMYLTALDPYYYLRMSENYLENGHTGDTLKNIDGQQVPWDSYKYGPTGARATFNLLSVVTVWVYQVWHAMDSTVTLMNAAFWVPAILSMFLITPIFFTVRRITSSDIGGAVAAILASLSPSIFVKTVAGFSDTPILEILPLLFIVWFIIEAIHYSKEKNYKSLIYGLLATLMLALYPFMWSAWWYGYYIVIAFLVIYAIYKGISYNSIAKYTKSKNNNHKDKIESEKLEMLNILKISGLFIIGGAVLITALYGVSTTMNALQAPLNYLGLDEVSSQTGWPNVLTTVSELDTASLDEIISSSLGSIHLFAIGLIGIFLSLFRKVLTPVKQISNGLAEKLDIKYALLLIIWFAVTFLAASKGVRFVALMVPPLSIGVGIFVGFIEQFIKNNLDKKYEYVAYPTIAIIVLYALFTIYRADSADLVRMLLPSNYVPIAEGIMLASLAVLIIYKVAELIAESNKKLVMNKIFMILLAIGLITPTIATIVPFYSVPTYNDGWGESLEWINTQTPNNSVVTCWWDNGHIYTWKTDRMVTFDGSSQNTPRAYWVGRAFSTSNESLANGIFRMLASSGDKAYTTDSVLIKKTGSIKNTVDVLNEILPLTKSDAQKALKNSSYKFTDTEVSEILDATHPKVTNPDYLITYNRMTSIASVWSYFGNWDFNLPAGTSRSEREAGSFQGLQTYATNINDTLIVRSLIQQTAEYNIYTLIEVRNETLTGAMMAVTNDGQMQTQQLNMHKVKLMVNENGKSKMYNSLADPDGQLSLLIKVDKNSIIGTDGSNNPVYSSSSWMATANLEDSVYSKLHFFDGEGLDTIKLEKESLDPTANGVQPGFKVFSVDYGNYSK</sequence>
<reference key="1">
    <citation type="submission" date="2006-01" db="EMBL/GenBank/DDBJ databases">
        <title>Partial sequence of Methanococcus voltae genome.</title>
        <authorList>
            <person name="Bhattacharyya A."/>
            <person name="Overbeek R."/>
            <person name="Jarrell K."/>
            <person name="Chaban B."/>
            <person name="Whitman W."/>
        </authorList>
    </citation>
    <scope>NUCLEOTIDE SEQUENCE [GENOMIC DNA]</scope>
    <source>
        <strain>ATCC 33273 / DSM 1537 / NBRC 100457 / OCM 70 / PS</strain>
    </source>
</reference>
<reference key="2">
    <citation type="journal article" date="2006" name="Mol. Microbiol.">
        <title>Identification of genes involved in the biosynthesis and attachment of Methanococcus voltae N-linked glycans: insight into N-linked glycosylation pathways in Archaea.</title>
        <authorList>
            <person name="Chaban B."/>
            <person name="Voisin S."/>
            <person name="Kelly J."/>
            <person name="Logan S.M."/>
            <person name="Jarrell K.F."/>
        </authorList>
    </citation>
    <scope>FUNCTION</scope>
    <scope>DISRUPTION PHENOTYPE</scope>
    <source>
        <strain>ATCC 33273 / DSM 1537 / NBRC 100457 / OCM 70 / PS</strain>
    </source>
</reference>
<reference key="3">
    <citation type="journal article" date="2013" name="Nat. Chem. Biol.">
        <title>Biochemical evidence for an alternate pathway in N-linked glycoprotein biosynthesis.</title>
        <authorList>
            <person name="Larkin A."/>
            <person name="Chang M.M."/>
            <person name="Whitworth G.E."/>
            <person name="Imperiali B."/>
        </authorList>
    </citation>
    <scope>FUNCTION</scope>
    <scope>CATALYTIC ACTIVITY</scope>
    <scope>COFACTOR</scope>
    <scope>SUBSTRATE SPECIFICITY</scope>
    <source>
        <strain>ATCC 33273 / DSM 1537 / NBRC 100457 / OCM 70 / PS</strain>
    </source>
</reference>
<reference key="4">
    <citation type="journal article" date="2014" name="Appl. Environ. Microbiol.">
        <title>Substrate promiscuity: AglB, the archaeal oligosaccharyltransferase, can process a variety of lipid-linked glycans.</title>
        <authorList>
            <person name="Cohen-Rosenzweig C."/>
            <person name="Guan Z."/>
            <person name="Shaanan B."/>
            <person name="Eichler J."/>
        </authorList>
    </citation>
    <scope>FUNCTION</scope>
</reference>
<reference key="5">
    <citation type="journal article" date="2016" name="J. Biol. Chem.">
        <title>Comparative analysis of archaeal lipid-linked oligosaccharides that serve as oligosaccharide donors for Asn glycosylation.</title>
        <authorList>
            <person name="Taguchi Y."/>
            <person name="Fujinami D."/>
            <person name="Kohda D."/>
        </authorList>
    </citation>
    <scope>COMPOSITION OF LIPID-LINKED OLIGOSACCHARIDE</scope>
</reference>
<dbReference type="EC" id="2.4.99.21" evidence="7"/>
<dbReference type="EMBL" id="DQ372942">
    <property type="protein sequence ID" value="ABD17750.1"/>
    <property type="molecule type" value="Genomic_DNA"/>
</dbReference>
<dbReference type="KEGG" id="ag:ABD17750"/>
<dbReference type="BioCyc" id="MetaCyc:MONOMER-19266"/>
<dbReference type="BRENDA" id="2.4.99.21">
    <property type="organism ID" value="3268"/>
</dbReference>
<dbReference type="UniPathway" id="UPA00378"/>
<dbReference type="UniPathway" id="UPA00977"/>
<dbReference type="GO" id="GO:0005886">
    <property type="term" value="C:plasma membrane"/>
    <property type="evidence" value="ECO:0007669"/>
    <property type="project" value="UniProtKB-SubCell"/>
</dbReference>
<dbReference type="GO" id="GO:0016757">
    <property type="term" value="F:glycosyltransferase activity"/>
    <property type="evidence" value="ECO:0000314"/>
    <property type="project" value="UniProtKB"/>
</dbReference>
<dbReference type="GO" id="GO:0046872">
    <property type="term" value="F:metal ion binding"/>
    <property type="evidence" value="ECO:0007669"/>
    <property type="project" value="UniProtKB-KW"/>
</dbReference>
<dbReference type="GO" id="GO:0004576">
    <property type="term" value="F:oligosaccharyl transferase activity"/>
    <property type="evidence" value="ECO:0007669"/>
    <property type="project" value="InterPro"/>
</dbReference>
<dbReference type="GO" id="GO:0006486">
    <property type="term" value="P:protein glycosylation"/>
    <property type="evidence" value="ECO:0007669"/>
    <property type="project" value="UniProtKB-UniPathway"/>
</dbReference>
<dbReference type="GO" id="GO:0045232">
    <property type="term" value="P:S-layer organization"/>
    <property type="evidence" value="ECO:0000315"/>
    <property type="project" value="UniProtKB"/>
</dbReference>
<dbReference type="Gene3D" id="3.40.50.12610">
    <property type="match status" value="1"/>
</dbReference>
<dbReference type="InterPro" id="IPR003674">
    <property type="entry name" value="Oligo_trans_STT3"/>
</dbReference>
<dbReference type="InterPro" id="IPR048999">
    <property type="entry name" value="STT3-PglB_core"/>
</dbReference>
<dbReference type="InterPro" id="IPR048307">
    <property type="entry name" value="STT3_N"/>
</dbReference>
<dbReference type="PANTHER" id="PTHR13872">
    <property type="entry name" value="DOLICHYL-DIPHOSPHOOLIGOSACCHARIDE--PROTEIN GLYCOSYLTRANSFERASE SUBUNIT"/>
    <property type="match status" value="1"/>
</dbReference>
<dbReference type="PANTHER" id="PTHR13872:SF1">
    <property type="entry name" value="DOLICHYL-DIPHOSPHOOLIGOSACCHARIDE--PROTEIN GLYCOSYLTRANSFERASE SUBUNIT STT3B"/>
    <property type="match status" value="1"/>
</dbReference>
<dbReference type="Pfam" id="PF02516">
    <property type="entry name" value="STT3"/>
    <property type="match status" value="1"/>
</dbReference>
<dbReference type="Pfam" id="PF21436">
    <property type="entry name" value="STT3-PglB_core"/>
    <property type="match status" value="1"/>
</dbReference>